<feature type="chain" id="PRO_1000203555" description="Phosphoserine aminotransferase">
    <location>
        <begin position="1"/>
        <end position="362"/>
    </location>
</feature>
<feature type="binding site" evidence="1">
    <location>
        <position position="9"/>
    </location>
    <ligand>
        <name>L-glutamate</name>
        <dbReference type="ChEBI" id="CHEBI:29985"/>
    </ligand>
</feature>
<feature type="binding site" evidence="1">
    <location>
        <position position="42"/>
    </location>
    <ligand>
        <name>L-glutamate</name>
        <dbReference type="ChEBI" id="CHEBI:29985"/>
    </ligand>
</feature>
<feature type="binding site" evidence="1">
    <location>
        <begin position="76"/>
        <end position="77"/>
    </location>
    <ligand>
        <name>pyridoxal 5'-phosphate</name>
        <dbReference type="ChEBI" id="CHEBI:597326"/>
    </ligand>
</feature>
<feature type="binding site" evidence="1">
    <location>
        <position position="102"/>
    </location>
    <ligand>
        <name>pyridoxal 5'-phosphate</name>
        <dbReference type="ChEBI" id="CHEBI:597326"/>
    </ligand>
</feature>
<feature type="binding site" evidence="1">
    <location>
        <position position="153"/>
    </location>
    <ligand>
        <name>pyridoxal 5'-phosphate</name>
        <dbReference type="ChEBI" id="CHEBI:597326"/>
    </ligand>
</feature>
<feature type="binding site" evidence="1">
    <location>
        <position position="174"/>
    </location>
    <ligand>
        <name>pyridoxal 5'-phosphate</name>
        <dbReference type="ChEBI" id="CHEBI:597326"/>
    </ligand>
</feature>
<feature type="binding site" evidence="1">
    <location>
        <position position="197"/>
    </location>
    <ligand>
        <name>pyridoxal 5'-phosphate</name>
        <dbReference type="ChEBI" id="CHEBI:597326"/>
    </ligand>
</feature>
<feature type="binding site" evidence="1">
    <location>
        <begin position="239"/>
        <end position="240"/>
    </location>
    <ligand>
        <name>pyridoxal 5'-phosphate</name>
        <dbReference type="ChEBI" id="CHEBI:597326"/>
    </ligand>
</feature>
<feature type="modified residue" description="N6-(pyridoxal phosphate)lysine" evidence="1">
    <location>
        <position position="198"/>
    </location>
</feature>
<dbReference type="EC" id="2.6.1.52" evidence="1"/>
<dbReference type="EMBL" id="CP001120">
    <property type="protein sequence ID" value="ACF67449.1"/>
    <property type="molecule type" value="Genomic_DNA"/>
</dbReference>
<dbReference type="RefSeq" id="WP_000079590.1">
    <property type="nucleotide sequence ID" value="NC_011083.1"/>
</dbReference>
<dbReference type="SMR" id="B4TD37"/>
<dbReference type="KEGG" id="seh:SeHA_C1075"/>
<dbReference type="HOGENOM" id="CLU_034866_0_2_6"/>
<dbReference type="UniPathway" id="UPA00135">
    <property type="reaction ID" value="UER00197"/>
</dbReference>
<dbReference type="UniPathway" id="UPA00244">
    <property type="reaction ID" value="UER00311"/>
</dbReference>
<dbReference type="Proteomes" id="UP000001866">
    <property type="component" value="Chromosome"/>
</dbReference>
<dbReference type="GO" id="GO:0005737">
    <property type="term" value="C:cytoplasm"/>
    <property type="evidence" value="ECO:0007669"/>
    <property type="project" value="UniProtKB-SubCell"/>
</dbReference>
<dbReference type="GO" id="GO:0004648">
    <property type="term" value="F:O-phospho-L-serine:2-oxoglutarate aminotransferase activity"/>
    <property type="evidence" value="ECO:0007669"/>
    <property type="project" value="UniProtKB-UniRule"/>
</dbReference>
<dbReference type="GO" id="GO:0030170">
    <property type="term" value="F:pyridoxal phosphate binding"/>
    <property type="evidence" value="ECO:0007669"/>
    <property type="project" value="UniProtKB-UniRule"/>
</dbReference>
<dbReference type="GO" id="GO:0006564">
    <property type="term" value="P:L-serine biosynthetic process"/>
    <property type="evidence" value="ECO:0007669"/>
    <property type="project" value="UniProtKB-UniRule"/>
</dbReference>
<dbReference type="GO" id="GO:0008615">
    <property type="term" value="P:pyridoxine biosynthetic process"/>
    <property type="evidence" value="ECO:0007669"/>
    <property type="project" value="UniProtKB-UniRule"/>
</dbReference>
<dbReference type="CDD" id="cd00611">
    <property type="entry name" value="PSAT_like"/>
    <property type="match status" value="1"/>
</dbReference>
<dbReference type="FunFam" id="3.40.640.10:FF:000010">
    <property type="entry name" value="Phosphoserine aminotransferase"/>
    <property type="match status" value="1"/>
</dbReference>
<dbReference type="FunFam" id="3.90.1150.10:FF:000006">
    <property type="entry name" value="Phosphoserine aminotransferase"/>
    <property type="match status" value="1"/>
</dbReference>
<dbReference type="Gene3D" id="3.90.1150.10">
    <property type="entry name" value="Aspartate Aminotransferase, domain 1"/>
    <property type="match status" value="1"/>
</dbReference>
<dbReference type="Gene3D" id="3.40.640.10">
    <property type="entry name" value="Type I PLP-dependent aspartate aminotransferase-like (Major domain)"/>
    <property type="match status" value="1"/>
</dbReference>
<dbReference type="HAMAP" id="MF_00160">
    <property type="entry name" value="SerC_aminotrans_5"/>
    <property type="match status" value="1"/>
</dbReference>
<dbReference type="InterPro" id="IPR000192">
    <property type="entry name" value="Aminotrans_V_dom"/>
</dbReference>
<dbReference type="InterPro" id="IPR020578">
    <property type="entry name" value="Aminotrans_V_PyrdxlP_BS"/>
</dbReference>
<dbReference type="InterPro" id="IPR022278">
    <property type="entry name" value="Pser_aminoTfrase"/>
</dbReference>
<dbReference type="InterPro" id="IPR015424">
    <property type="entry name" value="PyrdxlP-dep_Trfase"/>
</dbReference>
<dbReference type="InterPro" id="IPR015421">
    <property type="entry name" value="PyrdxlP-dep_Trfase_major"/>
</dbReference>
<dbReference type="InterPro" id="IPR015422">
    <property type="entry name" value="PyrdxlP-dep_Trfase_small"/>
</dbReference>
<dbReference type="NCBIfam" id="NF003764">
    <property type="entry name" value="PRK05355.1"/>
    <property type="match status" value="1"/>
</dbReference>
<dbReference type="NCBIfam" id="TIGR01364">
    <property type="entry name" value="serC_1"/>
    <property type="match status" value="1"/>
</dbReference>
<dbReference type="PANTHER" id="PTHR43247">
    <property type="entry name" value="PHOSPHOSERINE AMINOTRANSFERASE"/>
    <property type="match status" value="1"/>
</dbReference>
<dbReference type="PANTHER" id="PTHR43247:SF1">
    <property type="entry name" value="PHOSPHOSERINE AMINOTRANSFERASE"/>
    <property type="match status" value="1"/>
</dbReference>
<dbReference type="Pfam" id="PF00266">
    <property type="entry name" value="Aminotran_5"/>
    <property type="match status" value="1"/>
</dbReference>
<dbReference type="PIRSF" id="PIRSF000525">
    <property type="entry name" value="SerC"/>
    <property type="match status" value="1"/>
</dbReference>
<dbReference type="SUPFAM" id="SSF53383">
    <property type="entry name" value="PLP-dependent transferases"/>
    <property type="match status" value="1"/>
</dbReference>
<dbReference type="PROSITE" id="PS00595">
    <property type="entry name" value="AA_TRANSFER_CLASS_5"/>
    <property type="match status" value="1"/>
</dbReference>
<reference key="1">
    <citation type="journal article" date="2011" name="J. Bacteriol.">
        <title>Comparative genomics of 28 Salmonella enterica isolates: evidence for CRISPR-mediated adaptive sublineage evolution.</title>
        <authorList>
            <person name="Fricke W.F."/>
            <person name="Mammel M.K."/>
            <person name="McDermott P.F."/>
            <person name="Tartera C."/>
            <person name="White D.G."/>
            <person name="Leclerc J.E."/>
            <person name="Ravel J."/>
            <person name="Cebula T.A."/>
        </authorList>
    </citation>
    <scope>NUCLEOTIDE SEQUENCE [LARGE SCALE GENOMIC DNA]</scope>
    <source>
        <strain>SL476</strain>
    </source>
</reference>
<organism>
    <name type="scientific">Salmonella heidelberg (strain SL476)</name>
    <dbReference type="NCBI Taxonomy" id="454169"/>
    <lineage>
        <taxon>Bacteria</taxon>
        <taxon>Pseudomonadati</taxon>
        <taxon>Pseudomonadota</taxon>
        <taxon>Gammaproteobacteria</taxon>
        <taxon>Enterobacterales</taxon>
        <taxon>Enterobacteriaceae</taxon>
        <taxon>Salmonella</taxon>
    </lineage>
</organism>
<protein>
    <recommendedName>
        <fullName evidence="1">Phosphoserine aminotransferase</fullName>
        <ecNumber evidence="1">2.6.1.52</ecNumber>
    </recommendedName>
    <alternativeName>
        <fullName evidence="1">Phosphohydroxythreonine aminotransferase</fullName>
        <shortName evidence="1">PSAT</shortName>
    </alternativeName>
</protein>
<sequence>MAQVFNFSSGPAMLPAEVLKLAQQELRDWHGLGTSVMEISHRGKEFIQVAEEAEQDFRDLLNIPSNYKVLFCHGGGRGQFAGVPLNLLGDKTTADYVDAGYWAASAIKEAKKYCAPQIIDAKITVDGKRAVKPMREWQLSDNAAYLHYCPNETIDGIAIDETPDFGPEVVVTADFSSTILSAPLDVSRYGVIYAGAQKNIGPAGLTLVIVREDLLGKAHESCPSILDYTVLNDNDSMFNTPPTFAWYLSGLVFKWLKAQGGVAAMHKINQQKAELLYGVIDNSDFYRNDVAQANRSRMNVPFQLADNALDKVFLEESFAAGLHALKGHRVVGGMRASIYNAMPIEGVKALTDFMIDFERRHG</sequence>
<evidence type="ECO:0000255" key="1">
    <source>
        <dbReference type="HAMAP-Rule" id="MF_00160"/>
    </source>
</evidence>
<gene>
    <name evidence="1" type="primary">serC</name>
    <name type="ordered locus">SeHA_C1075</name>
</gene>
<keyword id="KW-0028">Amino-acid biosynthesis</keyword>
<keyword id="KW-0032">Aminotransferase</keyword>
<keyword id="KW-0963">Cytoplasm</keyword>
<keyword id="KW-0663">Pyridoxal phosphate</keyword>
<keyword id="KW-0664">Pyridoxine biosynthesis</keyword>
<keyword id="KW-0718">Serine biosynthesis</keyword>
<keyword id="KW-0808">Transferase</keyword>
<accession>B4TD37</accession>
<name>SERC_SALHS</name>
<comment type="function">
    <text evidence="1">Catalyzes the reversible conversion of 3-phosphohydroxypyruvate to phosphoserine and of 3-hydroxy-2-oxo-4-phosphonooxybutanoate to phosphohydroxythreonine.</text>
</comment>
<comment type="catalytic activity">
    <reaction evidence="1">
        <text>O-phospho-L-serine + 2-oxoglutarate = 3-phosphooxypyruvate + L-glutamate</text>
        <dbReference type="Rhea" id="RHEA:14329"/>
        <dbReference type="ChEBI" id="CHEBI:16810"/>
        <dbReference type="ChEBI" id="CHEBI:18110"/>
        <dbReference type="ChEBI" id="CHEBI:29985"/>
        <dbReference type="ChEBI" id="CHEBI:57524"/>
        <dbReference type="EC" id="2.6.1.52"/>
    </reaction>
</comment>
<comment type="catalytic activity">
    <reaction evidence="1">
        <text>4-(phosphooxy)-L-threonine + 2-oxoglutarate = (R)-3-hydroxy-2-oxo-4-phosphooxybutanoate + L-glutamate</text>
        <dbReference type="Rhea" id="RHEA:16573"/>
        <dbReference type="ChEBI" id="CHEBI:16810"/>
        <dbReference type="ChEBI" id="CHEBI:29985"/>
        <dbReference type="ChEBI" id="CHEBI:58452"/>
        <dbReference type="ChEBI" id="CHEBI:58538"/>
        <dbReference type="EC" id="2.6.1.52"/>
    </reaction>
</comment>
<comment type="cofactor">
    <cofactor evidence="1">
        <name>pyridoxal 5'-phosphate</name>
        <dbReference type="ChEBI" id="CHEBI:597326"/>
    </cofactor>
    <text evidence="1">Binds 1 pyridoxal phosphate per subunit.</text>
</comment>
<comment type="pathway">
    <text evidence="1">Amino-acid biosynthesis; L-serine biosynthesis; L-serine from 3-phospho-D-glycerate: step 2/3.</text>
</comment>
<comment type="pathway">
    <text evidence="1">Cofactor biosynthesis; pyridoxine 5'-phosphate biosynthesis; pyridoxine 5'-phosphate from D-erythrose 4-phosphate: step 3/5.</text>
</comment>
<comment type="subunit">
    <text evidence="1">Homodimer.</text>
</comment>
<comment type="subcellular location">
    <subcellularLocation>
        <location evidence="1">Cytoplasm</location>
    </subcellularLocation>
</comment>
<comment type="similarity">
    <text evidence="1">Belongs to the class-V pyridoxal-phosphate-dependent aminotransferase family. SerC subfamily.</text>
</comment>
<proteinExistence type="inferred from homology"/>